<accession>Q64MU6</accession>
<name>GLAA_BACFR</name>
<sequence length="605" mass="68152">MKKYLHILPACFLFYAAAHAQQKDTVYVTDFGAVPYSYENCVTQIQAAIDECKRTGAKVLSLPEGRYDIWPEGATRKEYYISNTSTEQECPSKVKTVGLMLHEIDDLTIEGNGATLMYHGKMTTIALEHCNGVRINNLHIDFERPAGSEIQYRKVTGGETEVTLHRDTRYEIVNGKIRLYGEGWRSNKNHCIEYDPDTESFTYSQGWNTLSASDAREIAPGIVRFNTPAEFMPKAGNTLTVRDIIRDQVGFFILESKNITLSRLQMHYMHGLGIVSQYTENITMDRVKCAPRPDSGRLLAASADMMHFSGCKGKVIIDSCYFAGAQDDPVNVHGTNLRALEKIDAQTLKLRFMHGQSYGFNAYFKGDTVAFIRAATMERFASATVRDVRRISDRIVEVRFDRDIPTSLELNHDCVENMTCTPEVEIRNSYFTRTSTRGTLVTTPRKVVIENNTYYKTGMSAILIEADAEGWYESGPVKDVLIKGNTFIDCAYNGGPGHAVIAIHPSNKIIDAERPVHQNIRIEDNTFRTFDYPVLYAKSTAGLLFRNNTIVRTETFPAASGNPYVFYLNGCKKAVIEGTVFKGETPRQSIKTENMKRKDLKTTIK</sequence>
<keyword id="KW-0326">Glycosidase</keyword>
<keyword id="KW-0378">Hydrolase</keyword>
<keyword id="KW-0677">Repeat</keyword>
<keyword id="KW-0732">Signal</keyword>
<comment type="function">
    <text evidence="1">Alpha-galactosidase that specifically removes branched alpha-1,3-linked galactose residues present in blood group B antigens. Has no activity toward linear alpha-1,3-linked galactose residues (By similarity).</text>
</comment>
<comment type="catalytic activity">
    <reaction>
        <text>Hydrolysis of terminal, non-reducing branched (1-&gt;3)-alpha-D-galactosidic residues, producing free D-galactose.</text>
        <dbReference type="EC" id="3.2.1.n1"/>
    </reaction>
</comment>
<comment type="catalytic activity">
    <reaction>
        <text>Hydrolysis of terminal, non-reducing alpha-D-galactose residues in alpha-D-galactosides, including galactose oligosaccharides, galactomannans and galactolipids.</text>
        <dbReference type="EC" id="3.2.1.22"/>
    </reaction>
</comment>
<comment type="similarity">
    <text evidence="3">Belongs to the glycosyl hydrolase 110 family. A subfamily.</text>
</comment>
<reference key="1">
    <citation type="journal article" date="2004" name="Proc. Natl. Acad. Sci. U.S.A.">
        <title>Genomic analysis of Bacteroides fragilis reveals extensive DNA inversions regulating cell surface adaptation.</title>
        <authorList>
            <person name="Kuwahara T."/>
            <person name="Yamashita A."/>
            <person name="Hirakawa H."/>
            <person name="Nakayama H."/>
            <person name="Toh H."/>
            <person name="Okada N."/>
            <person name="Kuhara S."/>
            <person name="Hattori M."/>
            <person name="Hayashi T."/>
            <person name="Ohnishi Y."/>
        </authorList>
    </citation>
    <scope>NUCLEOTIDE SEQUENCE [LARGE SCALE GENOMIC DNA]</scope>
    <source>
        <strain>YCH46</strain>
    </source>
</reference>
<organism>
    <name type="scientific">Bacteroides fragilis (strain YCH46)</name>
    <dbReference type="NCBI Taxonomy" id="295405"/>
    <lineage>
        <taxon>Bacteria</taxon>
        <taxon>Pseudomonadati</taxon>
        <taxon>Bacteroidota</taxon>
        <taxon>Bacteroidia</taxon>
        <taxon>Bacteroidales</taxon>
        <taxon>Bacteroidaceae</taxon>
        <taxon>Bacteroides</taxon>
    </lineage>
</organism>
<evidence type="ECO:0000250" key="1"/>
<evidence type="ECO:0000255" key="2"/>
<evidence type="ECO:0000305" key="3"/>
<feature type="signal peptide" evidence="2">
    <location>
        <begin position="1"/>
        <end position="20"/>
    </location>
</feature>
<feature type="chain" id="PRO_0000348472" description="Alpha-1,3-galactosidase A">
    <location>
        <begin position="21"/>
        <end position="605"/>
    </location>
</feature>
<feature type="repeat" description="PbH1 1">
    <location>
        <begin position="256"/>
        <end position="278"/>
    </location>
</feature>
<feature type="repeat" description="PbH1 2">
    <location>
        <begin position="312"/>
        <end position="334"/>
    </location>
</feature>
<feature type="repeat" description="PbH1 3">
    <location>
        <begin position="421"/>
        <end position="443"/>
    </location>
</feature>
<feature type="repeat" description="PbH1 4">
    <location>
        <begin position="444"/>
        <end position="466"/>
    </location>
</feature>
<feature type="repeat" description="PbH1 5">
    <location>
        <begin position="477"/>
        <end position="507"/>
    </location>
</feature>
<feature type="repeat" description="PbH1 6">
    <location>
        <begin position="517"/>
        <end position="547"/>
    </location>
</feature>
<proteinExistence type="inferred from homology"/>
<protein>
    <recommendedName>
        <fullName>Alpha-1,3-galactosidase A</fullName>
        <ecNumber>3.2.1.n1</ecNumber>
    </recommendedName>
    <alternativeName>
        <fullName>Exo-alpha-galactosidase A</fullName>
        <ecNumber>3.2.1.22</ecNumber>
    </alternativeName>
</protein>
<gene>
    <name type="primary">glaA</name>
    <name type="ordered locus">BF4454</name>
</gene>
<dbReference type="EC" id="3.2.1.n1"/>
<dbReference type="EC" id="3.2.1.22"/>
<dbReference type="EMBL" id="AP006841">
    <property type="protein sequence ID" value="BAD51191.1"/>
    <property type="molecule type" value="Genomic_DNA"/>
</dbReference>
<dbReference type="RefSeq" id="WP_011203704.1">
    <property type="nucleotide sequence ID" value="NC_006347.1"/>
</dbReference>
<dbReference type="RefSeq" id="YP_101725.1">
    <property type="nucleotide sequence ID" value="NC_006347.1"/>
</dbReference>
<dbReference type="SMR" id="Q64MU6"/>
<dbReference type="STRING" id="295405.BF4454"/>
<dbReference type="CAZy" id="GH110">
    <property type="family name" value="Glycoside Hydrolase Family 110"/>
</dbReference>
<dbReference type="KEGG" id="bfr:BF4454"/>
<dbReference type="PATRIC" id="fig|295405.11.peg.4292"/>
<dbReference type="HOGENOM" id="CLU_017693_0_0_10"/>
<dbReference type="OrthoDB" id="9807299at2"/>
<dbReference type="Proteomes" id="UP000002197">
    <property type="component" value="Chromosome"/>
</dbReference>
<dbReference type="GO" id="GO:0004557">
    <property type="term" value="F:alpha-galactosidase activity"/>
    <property type="evidence" value="ECO:0007669"/>
    <property type="project" value="UniProtKB-EC"/>
</dbReference>
<dbReference type="Gene3D" id="2.160.20.10">
    <property type="entry name" value="Single-stranded right-handed beta-helix, Pectin lyase-like"/>
    <property type="match status" value="3"/>
</dbReference>
<dbReference type="InterPro" id="IPR056441">
    <property type="entry name" value="Beta-barrel_GLAA-B_II"/>
</dbReference>
<dbReference type="InterPro" id="IPR039448">
    <property type="entry name" value="Beta_helix"/>
</dbReference>
<dbReference type="InterPro" id="IPR006626">
    <property type="entry name" value="PbH1"/>
</dbReference>
<dbReference type="InterPro" id="IPR012334">
    <property type="entry name" value="Pectin_lyas_fold"/>
</dbReference>
<dbReference type="InterPro" id="IPR011050">
    <property type="entry name" value="Pectin_lyase_fold/virulence"/>
</dbReference>
<dbReference type="Pfam" id="PF23763">
    <property type="entry name" value="Beta-barrel_GLAA-B_I"/>
    <property type="match status" value="1"/>
</dbReference>
<dbReference type="Pfam" id="PF23764">
    <property type="entry name" value="Beta-barrel_GLAA-B_II"/>
    <property type="match status" value="1"/>
</dbReference>
<dbReference type="Pfam" id="PF13229">
    <property type="entry name" value="Beta_helix"/>
    <property type="match status" value="1"/>
</dbReference>
<dbReference type="SMART" id="SM00710">
    <property type="entry name" value="PbH1"/>
    <property type="match status" value="6"/>
</dbReference>
<dbReference type="SUPFAM" id="SSF51126">
    <property type="entry name" value="Pectin lyase-like"/>
    <property type="match status" value="1"/>
</dbReference>